<name>RF1_FRATH</name>
<dbReference type="EMBL" id="AM233362">
    <property type="protein sequence ID" value="CAJ80160.1"/>
    <property type="molecule type" value="Genomic_DNA"/>
</dbReference>
<dbReference type="RefSeq" id="WP_003017177.1">
    <property type="nucleotide sequence ID" value="NZ_CP009694.1"/>
</dbReference>
<dbReference type="SMR" id="Q2A1Q0"/>
<dbReference type="KEGG" id="ftl:FTL_1721"/>
<dbReference type="Proteomes" id="UP000001944">
    <property type="component" value="Chromosome"/>
</dbReference>
<dbReference type="GO" id="GO:0005737">
    <property type="term" value="C:cytoplasm"/>
    <property type="evidence" value="ECO:0007669"/>
    <property type="project" value="UniProtKB-SubCell"/>
</dbReference>
<dbReference type="GO" id="GO:0016149">
    <property type="term" value="F:translation release factor activity, codon specific"/>
    <property type="evidence" value="ECO:0007669"/>
    <property type="project" value="UniProtKB-UniRule"/>
</dbReference>
<dbReference type="FunFam" id="3.30.160.20:FF:000004">
    <property type="entry name" value="Peptide chain release factor 1"/>
    <property type="match status" value="1"/>
</dbReference>
<dbReference type="FunFam" id="3.30.70.1660:FF:000002">
    <property type="entry name" value="Peptide chain release factor 1"/>
    <property type="match status" value="1"/>
</dbReference>
<dbReference type="FunFam" id="3.30.70.1660:FF:000004">
    <property type="entry name" value="Peptide chain release factor 1"/>
    <property type="match status" value="1"/>
</dbReference>
<dbReference type="Gene3D" id="3.30.160.20">
    <property type="match status" value="1"/>
</dbReference>
<dbReference type="Gene3D" id="3.30.70.1660">
    <property type="match status" value="2"/>
</dbReference>
<dbReference type="Gene3D" id="6.10.140.1950">
    <property type="match status" value="1"/>
</dbReference>
<dbReference type="HAMAP" id="MF_00093">
    <property type="entry name" value="Rel_fac_1"/>
    <property type="match status" value="1"/>
</dbReference>
<dbReference type="InterPro" id="IPR005139">
    <property type="entry name" value="PCRF"/>
</dbReference>
<dbReference type="InterPro" id="IPR000352">
    <property type="entry name" value="Pep_chain_release_fac_I"/>
</dbReference>
<dbReference type="InterPro" id="IPR045853">
    <property type="entry name" value="Pep_chain_release_fac_I_sf"/>
</dbReference>
<dbReference type="InterPro" id="IPR050057">
    <property type="entry name" value="Prokaryotic/Mito_RF"/>
</dbReference>
<dbReference type="InterPro" id="IPR004373">
    <property type="entry name" value="RF-1"/>
</dbReference>
<dbReference type="NCBIfam" id="TIGR00019">
    <property type="entry name" value="prfA"/>
    <property type="match status" value="1"/>
</dbReference>
<dbReference type="NCBIfam" id="NF001859">
    <property type="entry name" value="PRK00591.1"/>
    <property type="match status" value="1"/>
</dbReference>
<dbReference type="PANTHER" id="PTHR43804">
    <property type="entry name" value="LD18447P"/>
    <property type="match status" value="1"/>
</dbReference>
<dbReference type="PANTHER" id="PTHR43804:SF7">
    <property type="entry name" value="LD18447P"/>
    <property type="match status" value="1"/>
</dbReference>
<dbReference type="Pfam" id="PF03462">
    <property type="entry name" value="PCRF"/>
    <property type="match status" value="1"/>
</dbReference>
<dbReference type="Pfam" id="PF00472">
    <property type="entry name" value="RF-1"/>
    <property type="match status" value="1"/>
</dbReference>
<dbReference type="SMART" id="SM00937">
    <property type="entry name" value="PCRF"/>
    <property type="match status" value="1"/>
</dbReference>
<dbReference type="SUPFAM" id="SSF75620">
    <property type="entry name" value="Release factor"/>
    <property type="match status" value="1"/>
</dbReference>
<dbReference type="PROSITE" id="PS00745">
    <property type="entry name" value="RF_PROK_I"/>
    <property type="match status" value="1"/>
</dbReference>
<sequence length="361" mass="40402">MKDSIKAKLQSLIERHEEVSALLSEAGIISDQNKFRDLSKEYSHLEPIVKAFKEYTQALEDKQAAYEMLNEKDAELVEMAKEELKLANEAIEKLESELQIFLLPRDPNDDANVFLEIRAGTGGDEASIFSGDLFKMYSKYAEQRGWKIEVISASEGEHGGYKEIISRIYGDGVYSQLKFESGAHRVQRVPATESQGRIHTSACTVAVMPEADEVEGIDINPADIKVDTFRASGAGGQHVNKTDSAIRITHIPTGVVVECQDQRSQHKNRAAAMSMLKSKLLQAEIDKQQKEQSDTRKSLVGSGDRSERIRTYNYPQGRVTDHRINLTLYKLDEVMEGSLDSIIQPLVLEHQADLLATMSDE</sequence>
<comment type="function">
    <text evidence="1">Peptide chain release factor 1 directs the termination of translation in response to the peptide chain termination codons UAG and UAA.</text>
</comment>
<comment type="subcellular location">
    <subcellularLocation>
        <location evidence="1">Cytoplasm</location>
    </subcellularLocation>
</comment>
<comment type="PTM">
    <text evidence="1">Methylated by PrmC. Methylation increases the termination efficiency of RF1.</text>
</comment>
<comment type="similarity">
    <text evidence="1">Belongs to the prokaryotic/mitochondrial release factor family.</text>
</comment>
<accession>Q2A1Q0</accession>
<organism>
    <name type="scientific">Francisella tularensis subsp. holarctica (strain LVS)</name>
    <dbReference type="NCBI Taxonomy" id="376619"/>
    <lineage>
        <taxon>Bacteria</taxon>
        <taxon>Pseudomonadati</taxon>
        <taxon>Pseudomonadota</taxon>
        <taxon>Gammaproteobacteria</taxon>
        <taxon>Thiotrichales</taxon>
        <taxon>Francisellaceae</taxon>
        <taxon>Francisella</taxon>
    </lineage>
</organism>
<protein>
    <recommendedName>
        <fullName evidence="1">Peptide chain release factor 1</fullName>
        <shortName evidence="1">RF-1</shortName>
    </recommendedName>
</protein>
<feature type="chain" id="PRO_0000263275" description="Peptide chain release factor 1">
    <location>
        <begin position="1"/>
        <end position="361"/>
    </location>
</feature>
<feature type="region of interest" description="Disordered" evidence="2">
    <location>
        <begin position="287"/>
        <end position="313"/>
    </location>
</feature>
<feature type="compositionally biased region" description="Basic and acidic residues" evidence="2">
    <location>
        <begin position="287"/>
        <end position="297"/>
    </location>
</feature>
<feature type="modified residue" description="N5-methylglutamine" evidence="1">
    <location>
        <position position="237"/>
    </location>
</feature>
<evidence type="ECO:0000255" key="1">
    <source>
        <dbReference type="HAMAP-Rule" id="MF_00093"/>
    </source>
</evidence>
<evidence type="ECO:0000256" key="2">
    <source>
        <dbReference type="SAM" id="MobiDB-lite"/>
    </source>
</evidence>
<keyword id="KW-0963">Cytoplasm</keyword>
<keyword id="KW-0488">Methylation</keyword>
<keyword id="KW-0648">Protein biosynthesis</keyword>
<keyword id="KW-1185">Reference proteome</keyword>
<gene>
    <name evidence="1" type="primary">prfA</name>
    <name type="ordered locus">FTL_1721</name>
</gene>
<reference key="1">
    <citation type="submission" date="2006-03" db="EMBL/GenBank/DDBJ databases">
        <title>Complete genome sequence of Francisella tularensis LVS (Live Vaccine Strain).</title>
        <authorList>
            <person name="Chain P."/>
            <person name="Larimer F."/>
            <person name="Land M."/>
            <person name="Stilwagen S."/>
            <person name="Larsson P."/>
            <person name="Bearden S."/>
            <person name="Chu M."/>
            <person name="Oyston P."/>
            <person name="Forsman M."/>
            <person name="Andersson S."/>
            <person name="Lindler L."/>
            <person name="Titball R."/>
            <person name="Garcia E."/>
        </authorList>
    </citation>
    <scope>NUCLEOTIDE SEQUENCE [LARGE SCALE GENOMIC DNA]</scope>
    <source>
        <strain>LVS</strain>
    </source>
</reference>
<proteinExistence type="inferred from homology"/>